<keyword id="KW-0878">Amphibian defense peptide</keyword>
<keyword id="KW-0903">Direct protein sequencing</keyword>
<keyword id="KW-1213">G-protein coupled receptor impairing toxin</keyword>
<keyword id="KW-0964">Secreted</keyword>
<keyword id="KW-0800">Toxin</keyword>
<keyword id="KW-0838">Vasoactive</keyword>
<keyword id="KW-0840">Vasodilator</keyword>
<reference key="1">
    <citation type="journal article" date="1968" name="Chem. Pharm. Bull.">
        <title>Occurrence of a new active peptide on smooth muscle and bradykinin in the skin of Rana nigromaculata hallowell.</title>
        <authorList>
            <person name="Nakajima T."/>
        </authorList>
    </citation>
    <scope>PROTEIN SEQUENCE</scope>
    <source>
        <tissue>Skin</tissue>
    </source>
</reference>
<protein>
    <recommendedName>
        <fullName>Bradykinin-like peptide 1</fullName>
    </recommendedName>
</protein>
<dbReference type="PIR" id="A61358">
    <property type="entry name" value="A61358"/>
</dbReference>
<dbReference type="GO" id="GO:0005576">
    <property type="term" value="C:extracellular region"/>
    <property type="evidence" value="ECO:0007669"/>
    <property type="project" value="UniProtKB-SubCell"/>
</dbReference>
<dbReference type="GO" id="GO:0090729">
    <property type="term" value="F:toxin activity"/>
    <property type="evidence" value="ECO:0007669"/>
    <property type="project" value="UniProtKB-KW"/>
</dbReference>
<dbReference type="GO" id="GO:0006952">
    <property type="term" value="P:defense response"/>
    <property type="evidence" value="ECO:0007669"/>
    <property type="project" value="UniProtKB-KW"/>
</dbReference>
<dbReference type="GO" id="GO:0042311">
    <property type="term" value="P:vasodilation"/>
    <property type="evidence" value="ECO:0007669"/>
    <property type="project" value="UniProtKB-KW"/>
</dbReference>
<comment type="function">
    <text>Induces smooth muscle contraction. May target bradykinin receptors (BDKRB).</text>
</comment>
<comment type="subcellular location">
    <subcellularLocation>
        <location>Secreted</location>
    </subcellularLocation>
</comment>
<comment type="tissue specificity">
    <text>Expressed by the skin glands.</text>
</comment>
<comment type="similarity">
    <text evidence="1">Belongs to the bradykinin-related peptide family.</text>
</comment>
<accession>Q7LZ54</accession>
<evidence type="ECO:0000305" key="1"/>
<sequence>VPPGFTPFR</sequence>
<name>BRK1_PELNI</name>
<proteinExistence type="evidence at protein level"/>
<feature type="peptide" id="PRO_0000043524" description="Bradykinin-like peptide 1">
    <location>
        <begin position="1"/>
        <end position="9"/>
    </location>
</feature>
<organism>
    <name type="scientific">Pelophylax nigromaculatus</name>
    <name type="common">Black-spotted frog</name>
    <name type="synonym">Rana nigromaculata</name>
    <dbReference type="NCBI Taxonomy" id="8409"/>
    <lineage>
        <taxon>Eukaryota</taxon>
        <taxon>Metazoa</taxon>
        <taxon>Chordata</taxon>
        <taxon>Craniata</taxon>
        <taxon>Vertebrata</taxon>
        <taxon>Euteleostomi</taxon>
        <taxon>Amphibia</taxon>
        <taxon>Batrachia</taxon>
        <taxon>Anura</taxon>
        <taxon>Neobatrachia</taxon>
        <taxon>Ranoidea</taxon>
        <taxon>Ranidae</taxon>
        <taxon>Pelophylax</taxon>
    </lineage>
</organism>